<sequence>MELQVVGANALTVSETTFGREFNEALIHQVVVAYAAGARQGSRAQKTRAEVSGSGKKPWRQKGTGRARSGDIKSPIWRSGGTTFAAKPQDHSQKVNKKMYRGAIKSILSELVRQERLVVVEKFEVEAPKTKFLVQKLKDLALNDALIITASLDENLFLAARNLYKVDVRDVQGIDPVSLIAFDKVVITTDAVKQIEEMLA</sequence>
<keyword id="KW-1185">Reference proteome</keyword>
<keyword id="KW-0687">Ribonucleoprotein</keyword>
<keyword id="KW-0689">Ribosomal protein</keyword>
<keyword id="KW-0694">RNA-binding</keyword>
<keyword id="KW-0699">rRNA-binding</keyword>
<dbReference type="EMBL" id="AE017143">
    <property type="protein sequence ID" value="AAP96699.1"/>
    <property type="molecule type" value="Genomic_DNA"/>
</dbReference>
<dbReference type="RefSeq" id="WP_010945720.1">
    <property type="nucleotide sequence ID" value="NC_002940.2"/>
</dbReference>
<dbReference type="SMR" id="Q7VKD3"/>
<dbReference type="STRING" id="233412.HD_1982"/>
<dbReference type="GeneID" id="60733544"/>
<dbReference type="KEGG" id="hdu:HD_1982"/>
<dbReference type="eggNOG" id="COG0088">
    <property type="taxonomic scope" value="Bacteria"/>
</dbReference>
<dbReference type="HOGENOM" id="CLU_041575_5_2_6"/>
<dbReference type="OrthoDB" id="9803201at2"/>
<dbReference type="Proteomes" id="UP000001022">
    <property type="component" value="Chromosome"/>
</dbReference>
<dbReference type="GO" id="GO:1990904">
    <property type="term" value="C:ribonucleoprotein complex"/>
    <property type="evidence" value="ECO:0007669"/>
    <property type="project" value="UniProtKB-KW"/>
</dbReference>
<dbReference type="GO" id="GO:0005840">
    <property type="term" value="C:ribosome"/>
    <property type="evidence" value="ECO:0007669"/>
    <property type="project" value="UniProtKB-KW"/>
</dbReference>
<dbReference type="GO" id="GO:0019843">
    <property type="term" value="F:rRNA binding"/>
    <property type="evidence" value="ECO:0007669"/>
    <property type="project" value="UniProtKB-UniRule"/>
</dbReference>
<dbReference type="GO" id="GO:0003735">
    <property type="term" value="F:structural constituent of ribosome"/>
    <property type="evidence" value="ECO:0007669"/>
    <property type="project" value="InterPro"/>
</dbReference>
<dbReference type="GO" id="GO:0006412">
    <property type="term" value="P:translation"/>
    <property type="evidence" value="ECO:0007669"/>
    <property type="project" value="UniProtKB-UniRule"/>
</dbReference>
<dbReference type="FunFam" id="3.40.1370.10:FF:000001">
    <property type="entry name" value="50S ribosomal protein L4"/>
    <property type="match status" value="1"/>
</dbReference>
<dbReference type="Gene3D" id="3.40.1370.10">
    <property type="match status" value="1"/>
</dbReference>
<dbReference type="HAMAP" id="MF_01328_B">
    <property type="entry name" value="Ribosomal_uL4_B"/>
    <property type="match status" value="1"/>
</dbReference>
<dbReference type="InterPro" id="IPR002136">
    <property type="entry name" value="Ribosomal_uL4"/>
</dbReference>
<dbReference type="InterPro" id="IPR013005">
    <property type="entry name" value="Ribosomal_uL4-like"/>
</dbReference>
<dbReference type="InterPro" id="IPR023574">
    <property type="entry name" value="Ribosomal_uL4_dom_sf"/>
</dbReference>
<dbReference type="NCBIfam" id="TIGR03953">
    <property type="entry name" value="rplD_bact"/>
    <property type="match status" value="1"/>
</dbReference>
<dbReference type="PANTHER" id="PTHR10746">
    <property type="entry name" value="50S RIBOSOMAL PROTEIN L4"/>
    <property type="match status" value="1"/>
</dbReference>
<dbReference type="PANTHER" id="PTHR10746:SF6">
    <property type="entry name" value="LARGE RIBOSOMAL SUBUNIT PROTEIN UL4M"/>
    <property type="match status" value="1"/>
</dbReference>
<dbReference type="Pfam" id="PF00573">
    <property type="entry name" value="Ribosomal_L4"/>
    <property type="match status" value="1"/>
</dbReference>
<dbReference type="SUPFAM" id="SSF52166">
    <property type="entry name" value="Ribosomal protein L4"/>
    <property type="match status" value="1"/>
</dbReference>
<accession>Q7VKD3</accession>
<gene>
    <name evidence="1" type="primary">rplD</name>
    <name type="ordered locus">HD_1982</name>
</gene>
<name>RL4_HAEDU</name>
<proteinExistence type="inferred from homology"/>
<comment type="function">
    <text evidence="1">One of the primary rRNA binding proteins, this protein initially binds near the 5'-end of the 23S rRNA. It is important during the early stages of 50S assembly. It makes multiple contacts with different domains of the 23S rRNA in the assembled 50S subunit and ribosome.</text>
</comment>
<comment type="function">
    <text evidence="1">Forms part of the polypeptide exit tunnel.</text>
</comment>
<comment type="subunit">
    <text evidence="1">Part of the 50S ribosomal subunit.</text>
</comment>
<comment type="similarity">
    <text evidence="1">Belongs to the universal ribosomal protein uL4 family.</text>
</comment>
<reference key="1">
    <citation type="submission" date="2003-06" db="EMBL/GenBank/DDBJ databases">
        <title>The complete genome sequence of Haemophilus ducreyi.</title>
        <authorList>
            <person name="Munson R.S. Jr."/>
            <person name="Ray W.C."/>
            <person name="Mahairas G."/>
            <person name="Sabo P."/>
            <person name="Mungur R."/>
            <person name="Johnson L."/>
            <person name="Nguyen D."/>
            <person name="Wang J."/>
            <person name="Forst C."/>
            <person name="Hood L."/>
        </authorList>
    </citation>
    <scope>NUCLEOTIDE SEQUENCE [LARGE SCALE GENOMIC DNA]</scope>
    <source>
        <strain>35000HP / ATCC 700724</strain>
    </source>
</reference>
<protein>
    <recommendedName>
        <fullName evidence="1">Large ribosomal subunit protein uL4</fullName>
    </recommendedName>
    <alternativeName>
        <fullName evidence="3">50S ribosomal protein L4</fullName>
    </alternativeName>
</protein>
<organism>
    <name type="scientific">Haemophilus ducreyi (strain 35000HP / ATCC 700724)</name>
    <dbReference type="NCBI Taxonomy" id="233412"/>
    <lineage>
        <taxon>Bacteria</taxon>
        <taxon>Pseudomonadati</taxon>
        <taxon>Pseudomonadota</taxon>
        <taxon>Gammaproteobacteria</taxon>
        <taxon>Pasteurellales</taxon>
        <taxon>Pasteurellaceae</taxon>
        <taxon>Haemophilus</taxon>
    </lineage>
</organism>
<feature type="chain" id="PRO_0000129222" description="Large ribosomal subunit protein uL4">
    <location>
        <begin position="1"/>
        <end position="200"/>
    </location>
</feature>
<feature type="region of interest" description="Disordered" evidence="2">
    <location>
        <begin position="43"/>
        <end position="72"/>
    </location>
</feature>
<evidence type="ECO:0000255" key="1">
    <source>
        <dbReference type="HAMAP-Rule" id="MF_01328"/>
    </source>
</evidence>
<evidence type="ECO:0000256" key="2">
    <source>
        <dbReference type="SAM" id="MobiDB-lite"/>
    </source>
</evidence>
<evidence type="ECO:0000305" key="3"/>